<name>Y4KL_SINFN</name>
<protein>
    <recommendedName>
        <fullName>Uncharacterized AAA family ATPase y4kL</fullName>
    </recommendedName>
</protein>
<feature type="chain" id="PRO_0000084781" description="Uncharacterized AAA family ATPase y4kL">
    <location>
        <begin position="1"/>
        <end position="330"/>
    </location>
</feature>
<feature type="binding site" evidence="1">
    <location>
        <begin position="125"/>
        <end position="132"/>
    </location>
    <ligand>
        <name>ATP</name>
        <dbReference type="ChEBI" id="CHEBI:30616"/>
    </ligand>
</feature>
<evidence type="ECO:0000255" key="1"/>
<evidence type="ECO:0000305" key="2"/>
<geneLocation type="plasmid">
    <name>sym pNGR234a</name>
</geneLocation>
<comment type="similarity">
    <text evidence="2">Belongs to the AAA ATPase family.</text>
</comment>
<accession>P55530</accession>
<gene>
    <name type="ordered locus">NGR_a02840</name>
    <name type="ORF">y4kL</name>
</gene>
<reference key="1">
    <citation type="journal article" date="1997" name="Nature">
        <title>Molecular basis of symbiosis between Rhizobium and legumes.</title>
        <authorList>
            <person name="Freiberg C.A."/>
            <person name="Fellay R."/>
            <person name="Bairoch A."/>
            <person name="Broughton W.J."/>
            <person name="Rosenthal A."/>
            <person name="Perret X."/>
        </authorList>
    </citation>
    <scope>NUCLEOTIDE SEQUENCE [LARGE SCALE GENOMIC DNA]</scope>
    <source>
        <strain>NBRC 101917 / NGR234</strain>
    </source>
</reference>
<reference key="2">
    <citation type="journal article" date="2009" name="Appl. Environ. Microbiol.">
        <title>Rhizobium sp. strain NGR234 possesses a remarkable number of secretion systems.</title>
        <authorList>
            <person name="Schmeisser C."/>
            <person name="Liesegang H."/>
            <person name="Krysciak D."/>
            <person name="Bakkou N."/>
            <person name="Le Quere A."/>
            <person name="Wollherr A."/>
            <person name="Heinemeyer I."/>
            <person name="Morgenstern B."/>
            <person name="Pommerening-Roeser A."/>
            <person name="Flores M."/>
            <person name="Palacios R."/>
            <person name="Brenner S."/>
            <person name="Gottschalk G."/>
            <person name="Schmitz R.A."/>
            <person name="Broughton W.J."/>
            <person name="Perret X."/>
            <person name="Strittmatter A.W."/>
            <person name="Streit W.R."/>
        </authorList>
    </citation>
    <scope>NUCLEOTIDE SEQUENCE [LARGE SCALE GENOMIC DNA]</scope>
    <source>
        <strain>NBRC 101917 / NGR234</strain>
    </source>
</reference>
<keyword id="KW-0067">ATP-binding</keyword>
<keyword id="KW-0547">Nucleotide-binding</keyword>
<keyword id="KW-0614">Plasmid</keyword>
<keyword id="KW-1185">Reference proteome</keyword>
<organism>
    <name type="scientific">Sinorhizobium fredii (strain NBRC 101917 / NGR234)</name>
    <dbReference type="NCBI Taxonomy" id="394"/>
    <lineage>
        <taxon>Bacteria</taxon>
        <taxon>Pseudomonadati</taxon>
        <taxon>Pseudomonadota</taxon>
        <taxon>Alphaproteobacteria</taxon>
        <taxon>Hyphomicrobiales</taxon>
        <taxon>Rhizobiaceae</taxon>
        <taxon>Sinorhizobium/Ensifer group</taxon>
        <taxon>Sinorhizobium</taxon>
    </lineage>
</organism>
<dbReference type="EMBL" id="U00090">
    <property type="protein sequence ID" value="AAB91743.1"/>
    <property type="molecule type" value="Genomic_DNA"/>
</dbReference>
<dbReference type="RefSeq" id="NP_443941.1">
    <property type="nucleotide sequence ID" value="NC_000914.2"/>
</dbReference>
<dbReference type="RefSeq" id="WP_010875309.1">
    <property type="nucleotide sequence ID" value="NC_000914.2"/>
</dbReference>
<dbReference type="SMR" id="P55530"/>
<dbReference type="KEGG" id="rhi:NGR_a02840"/>
<dbReference type="PATRIC" id="fig|394.7.peg.302"/>
<dbReference type="eggNOG" id="COG0464">
    <property type="taxonomic scope" value="Bacteria"/>
</dbReference>
<dbReference type="HOGENOM" id="CLU_000688_25_0_5"/>
<dbReference type="OrthoDB" id="7438987at2"/>
<dbReference type="Proteomes" id="UP000001054">
    <property type="component" value="Plasmid pNGR234a"/>
</dbReference>
<dbReference type="GO" id="GO:0005524">
    <property type="term" value="F:ATP binding"/>
    <property type="evidence" value="ECO:0007669"/>
    <property type="project" value="UniProtKB-KW"/>
</dbReference>
<dbReference type="GO" id="GO:0016887">
    <property type="term" value="F:ATP hydrolysis activity"/>
    <property type="evidence" value="ECO:0007669"/>
    <property type="project" value="InterPro"/>
</dbReference>
<dbReference type="CDD" id="cd19481">
    <property type="entry name" value="RecA-like_protease"/>
    <property type="match status" value="1"/>
</dbReference>
<dbReference type="Gene3D" id="1.10.8.60">
    <property type="match status" value="1"/>
</dbReference>
<dbReference type="Gene3D" id="3.40.50.300">
    <property type="entry name" value="P-loop containing nucleotide triphosphate hydrolases"/>
    <property type="match status" value="1"/>
</dbReference>
<dbReference type="InterPro" id="IPR003593">
    <property type="entry name" value="AAA+_ATPase"/>
</dbReference>
<dbReference type="InterPro" id="IPR050168">
    <property type="entry name" value="AAA_ATPase_domain"/>
</dbReference>
<dbReference type="InterPro" id="IPR003959">
    <property type="entry name" value="ATPase_AAA_core"/>
</dbReference>
<dbReference type="InterPro" id="IPR027417">
    <property type="entry name" value="P-loop_NTPase"/>
</dbReference>
<dbReference type="PANTHER" id="PTHR23077">
    <property type="entry name" value="AAA-FAMILY ATPASE"/>
    <property type="match status" value="1"/>
</dbReference>
<dbReference type="PANTHER" id="PTHR23077:SF198">
    <property type="entry name" value="ATP-DEPENDENT ZINC METALLOPROTEASE FTSH"/>
    <property type="match status" value="1"/>
</dbReference>
<dbReference type="Pfam" id="PF00004">
    <property type="entry name" value="AAA"/>
    <property type="match status" value="1"/>
</dbReference>
<dbReference type="SMART" id="SM00382">
    <property type="entry name" value="AAA"/>
    <property type="match status" value="1"/>
</dbReference>
<dbReference type="SUPFAM" id="SSF52540">
    <property type="entry name" value="P-loop containing nucleoside triphosphate hydrolases"/>
    <property type="match status" value="1"/>
</dbReference>
<proteinExistence type="inferred from homology"/>
<sequence length="330" mass="37646">MARGELMKKLLASYGRDEDFRAVAEQIIDEEEKKNNRVLARTLRKTLEAGPQRTQSAPKALAPLIPFPEAAADFVERIEPEHNRNDIVLSAANVRVLLGLVKEFRRADEIRQHGLKVRSKMLFCGPPGCGKTLCAEIFAAELGLPLFRVKLDRLISSYLGETATNIRKTFEFARKQPCVLFFDEFDALARTRDDSGEHNELRRVVNSLLLFIDNMQPKGFLIAATNLDRSLDAAIWRRFDEVLWFDRPEAAMIGRFLKLKFKNVPVAFDPARNSAALEGYSFAEIERVCTQAIKAMIIERRKQVQERDFNRALQDEARRRAGQARLAPMI</sequence>